<comment type="function">
    <text evidence="5">Adds a myristoyl group to the N-terminal glycine residue of certain cellular proteins. Substrate specificity requires an N-terminal glycine in the nascent polypeptide substrates. Uncharged amino acids are preferred at position 2 while neutral residues are favored at positions 3 and 4. Ser is present at position 5 in almost all known N-myristoyl proteins and Lys is commonly encountered at postion 6.</text>
</comment>
<comment type="catalytic activity">
    <reaction evidence="2 5 7 8">
        <text>N-terminal glycyl-[protein] + tetradecanoyl-CoA = N-tetradecanoylglycyl-[protein] + CoA + H(+)</text>
        <dbReference type="Rhea" id="RHEA:15521"/>
        <dbReference type="Rhea" id="RHEA-COMP:12666"/>
        <dbReference type="Rhea" id="RHEA-COMP:12667"/>
        <dbReference type="ChEBI" id="CHEBI:15378"/>
        <dbReference type="ChEBI" id="CHEBI:57287"/>
        <dbReference type="ChEBI" id="CHEBI:57385"/>
        <dbReference type="ChEBI" id="CHEBI:64723"/>
        <dbReference type="ChEBI" id="CHEBI:133050"/>
        <dbReference type="EC" id="2.3.1.97"/>
    </reaction>
    <physiologicalReaction direction="left-to-right" evidence="2 5 7 8">
        <dbReference type="Rhea" id="RHEA:15522"/>
    </physiologicalReaction>
</comment>
<comment type="activity regulation">
    <text evidence="8">Inhibited by diethylpyrocarbonate. Competitively inhibited by S-(2-oxo)pentadecyl-CoA, a non hydrolysable myristoyl-CoA analog, and by SC-58272, a peptidomimetic derived from the N-terminal sequence of a natural substrate.</text>
</comment>
<comment type="biophysicochemical properties">
    <kinetics>
        <KM evidence="2 5">1.4 uM for myristoyl-CoA</KM>
    </kinetics>
    <phDependence>
        <text evidence="2 5">Optimum pH is 7.5-8.0.</text>
    </phDependence>
</comment>
<comment type="subunit">
    <text evidence="1 9">Monomer.</text>
</comment>
<comment type="subcellular location">
    <subcellularLocation>
        <location evidence="3">Cytoplasm</location>
    </subcellularLocation>
</comment>
<comment type="PTM">
    <text evidence="11">The N-terminus is blocked.</text>
</comment>
<comment type="miscellaneous">
    <text evidence="12">Has an ordered Bi-Bi kinetic mechanism, with myristoyl-CoA binding taking place prior to peptide binding and CoA release occurring before acylated peptide release. Cooperative interactions between the acyl-CoA and peptide binding sites of NMT contribute to its extraordinary chain-length specificity.</text>
</comment>
<comment type="similarity">
    <text evidence="10">Belongs to the NMT family.</text>
</comment>
<proteinExistence type="evidence at protein level"/>
<accession>P14743</accession>
<accession>D6VYJ8</accession>
<protein>
    <recommendedName>
        <fullName>Glycylpeptide N-tetradecanoyltransferase</fullName>
        <ecNumber evidence="2 5 7 8">2.3.1.97</ecNumber>
    </recommendedName>
    <alternativeName>
        <fullName>Cell division control protein 72</fullName>
    </alternativeName>
    <alternativeName>
        <fullName>Myristoyl-CoA:protein N-myristoyltransferase</fullName>
        <shortName>NMT</shortName>
    </alternativeName>
    <alternativeName>
        <fullName>Peptide N-myristoyltransferase</fullName>
    </alternativeName>
</protein>
<name>NMT_YEAST</name>
<sequence length="455" mass="52838">MSEEDKAKKLENLLKLLQLNNDDTSKFTQEQKKAMKDHKFWRTQPVKDFDEKVVEEGPIDKPKTPEDISDKPLPLLSSFEWCSIDVDNKKQLEDVFVLLNENYVEDRDAGFRFNYTKEFFNWALKSPGWKKDWHIGVRVKETQKLVAFISAIPVTLGVRGKQVPSVEINFLCVHKQLRSKRLTPVLIKEITRRVNKCDIWHALYTAGIVLPAPVSTCRYTHRPLNWKKLYEVDFTGLPDGHTEEDMIAENALPAKTKTAGLRKLKKEDIDQVFELFKRYQSRFELIQIFTKEEFEHNFIGEESLPLDKQVIFSYVVEQPDGKITDFFSFYSLPFTILNNTKYKDLGIGYLYYYATDADFQFKDRFDPKATKALKTRLCELIYDACILAKNANMDVFNALTSQDNTLFLDDLKFGPGDGFLNFYLFNYRAKPITGGLNPDNSNDIKRRSNVGVVML</sequence>
<reference key="1">
    <citation type="journal article" date="1989" name="Science">
        <title>Disruption of the yeast N-myristoyl transferase gene causes recessive lethality.</title>
        <authorList>
            <person name="Duronio R.J."/>
            <person name="Towler D.A."/>
            <person name="Heuckeroth R.O."/>
            <person name="Gordon J.I."/>
        </authorList>
    </citation>
    <scope>NUCLEOTIDE SEQUENCE [GENOMIC DNA]</scope>
    <scope>PROTEIN SEQUENCE OF 9-15; 132-138; 198-211; 292-301; 323-337 AND 413-428</scope>
    <source>
        <strain>ATCC 204511 / S288c / AB972</strain>
    </source>
</reference>
<reference key="2">
    <citation type="journal article" date="1997" name="Nature">
        <title>The nucleotide sequence of Saccharomyces cerevisiae chromosome XII.</title>
        <authorList>
            <person name="Johnston M."/>
            <person name="Hillier L.W."/>
            <person name="Riles L."/>
            <person name="Albermann K."/>
            <person name="Andre B."/>
            <person name="Ansorge W."/>
            <person name="Benes V."/>
            <person name="Brueckner M."/>
            <person name="Delius H."/>
            <person name="Dubois E."/>
            <person name="Duesterhoeft A."/>
            <person name="Entian K.-D."/>
            <person name="Floeth M."/>
            <person name="Goffeau A."/>
            <person name="Hebling U."/>
            <person name="Heumann K."/>
            <person name="Heuss-Neitzel D."/>
            <person name="Hilbert H."/>
            <person name="Hilger F."/>
            <person name="Kleine K."/>
            <person name="Koetter P."/>
            <person name="Louis E.J."/>
            <person name="Messenguy F."/>
            <person name="Mewes H.-W."/>
            <person name="Miosga T."/>
            <person name="Moestl D."/>
            <person name="Mueller-Auer S."/>
            <person name="Nentwich U."/>
            <person name="Obermaier B."/>
            <person name="Piravandi E."/>
            <person name="Pohl T.M."/>
            <person name="Portetelle D."/>
            <person name="Purnelle B."/>
            <person name="Rechmann S."/>
            <person name="Rieger M."/>
            <person name="Rinke M."/>
            <person name="Rose M."/>
            <person name="Scharfe M."/>
            <person name="Scherens B."/>
            <person name="Scholler P."/>
            <person name="Schwager C."/>
            <person name="Schwarz S."/>
            <person name="Underwood A.P."/>
            <person name="Urrestarazu L.A."/>
            <person name="Vandenbol M."/>
            <person name="Verhasselt P."/>
            <person name="Vierendeels F."/>
            <person name="Voet M."/>
            <person name="Volckaert G."/>
            <person name="Voss H."/>
            <person name="Wambutt R."/>
            <person name="Wedler E."/>
            <person name="Wedler H."/>
            <person name="Zimmermann F.K."/>
            <person name="Zollner A."/>
            <person name="Hani J."/>
            <person name="Hoheisel J.D."/>
        </authorList>
    </citation>
    <scope>NUCLEOTIDE SEQUENCE [LARGE SCALE GENOMIC DNA]</scope>
    <source>
        <strain>ATCC 204508 / S288c</strain>
    </source>
</reference>
<reference key="3">
    <citation type="journal article" date="2014" name="G3 (Bethesda)">
        <title>The reference genome sequence of Saccharomyces cerevisiae: Then and now.</title>
        <authorList>
            <person name="Engel S.R."/>
            <person name="Dietrich F.S."/>
            <person name="Fisk D.G."/>
            <person name="Binkley G."/>
            <person name="Balakrishnan R."/>
            <person name="Costanzo M.C."/>
            <person name="Dwight S.S."/>
            <person name="Hitz B.C."/>
            <person name="Karra K."/>
            <person name="Nash R.S."/>
            <person name="Weng S."/>
            <person name="Wong E.D."/>
            <person name="Lloyd P."/>
            <person name="Skrzypek M.S."/>
            <person name="Miyasato S.R."/>
            <person name="Simison M."/>
            <person name="Cherry J.M."/>
        </authorList>
    </citation>
    <scope>GENOME REANNOTATION</scope>
    <source>
        <strain>ATCC 204508 / S288c</strain>
    </source>
</reference>
<reference key="4">
    <citation type="journal article" date="1987" name="Proc. Natl. Acad. Sci. U.S.A.">
        <title>Purification and characterization of yeast myristoyl CoA:protein N-myristoyltransferase.</title>
        <authorList>
            <person name="Towler D.A."/>
            <person name="Adams S.P."/>
            <person name="Eubanks S.R."/>
            <person name="Towery D.S."/>
            <person name="Jackson-Machelski E."/>
            <person name="Glaser L."/>
            <person name="Gordon J.I."/>
        </authorList>
    </citation>
    <scope>FUNCTION</scope>
    <scope>CATALYTIC ACTIVITY</scope>
    <scope>SUBSTRATE SPECIFICITY</scope>
    <scope>BIOPHYSICOCHEMICAL PROPERTIES</scope>
</reference>
<reference key="5">
    <citation type="journal article" date="1987" name="Proc. Natl. Acad. Sci. U.S.A.">
        <authorList>
            <person name="Towler D.A."/>
            <person name="Adams S.P."/>
            <person name="Eubanks S.R."/>
            <person name="Towery D.S."/>
            <person name="Jackson-Machelski E."/>
            <person name="Glaser L."/>
            <person name="Gordon J.I."/>
        </authorList>
    </citation>
    <scope>ERRATUM OF PUBMED:3106975</scope>
</reference>
<reference key="6">
    <citation type="journal article" date="1991" name="J. Cell Biol.">
        <title>Myristic acid auxotrophy caused by mutation of S. cerevisiae myristoyl-CoA:protein N-myristoyltransferase.</title>
        <authorList>
            <person name="Duronio R.J."/>
            <person name="Rudnick D.A."/>
            <person name="Johnson R.L."/>
            <person name="Johnson D.R."/>
            <person name="Gordon J.I."/>
        </authorList>
    </citation>
    <scope>MUTAGENESIS OF GLY-451</scope>
</reference>
<reference key="7">
    <citation type="journal article" date="1993" name="J. Biol. Chem.">
        <title>Genetic and biochemical studies of a mutant Saccharomyces cerevisiae myristoyl-CoA:protein N-myristoyltransferase, nmt72pLeu99--&gt;Pro, that produces temperature-sensitive myristic acid auxotrophy.</title>
        <authorList>
            <person name="Johnson D.R."/>
            <person name="Duronio R.J."/>
            <person name="Langner C.A."/>
            <person name="Rudnick D.A."/>
            <person name="Gordon J.I."/>
        </authorList>
    </citation>
    <scope>MUTAGENESIS OF LEU-99</scope>
</reference>
<reference key="8">
    <citation type="journal article" date="1993" name="Proc. Natl. Acad. Sci. U.S.A.">
        <title>Use of photoactivatable peptide substrates of Saccharomyces cerevisiae myristoyl-CoA:protein N-myristoyltransferase (Nmt1p) to characterize a myristoyl-CoA-Nmt1p-peptide ternary complex and to provide evidence for an ordered reaction mechanism.</title>
        <authorList>
            <person name="Rudnick D.A."/>
            <person name="Rocque W.J."/>
            <person name="McWherter C.A."/>
            <person name="Toth M.V."/>
            <person name="Jackson-Machelski E."/>
            <person name="Gordon J.I."/>
        </authorList>
    </citation>
    <scope>CATALYTIC ACTIVITY</scope>
</reference>
<reference key="9">
    <citation type="journal article" date="1996" name="J. Biol. Chem.">
        <title>Biochemical studies of Saccharomyces cerevisiae myristoyl-coenzyme A:protein N-myristoyltransferase mutants.</title>
        <authorList>
            <person name="Zhang L."/>
            <person name="Jackson-Machelski E."/>
            <person name="Gordon J.I."/>
        </authorList>
    </citation>
    <scope>CATALYTIC ACTIVITY</scope>
    <scope>MUTAGENESIS OF ALA-202; CYS-217; SER-328; ASN-404 AND ASN-426</scope>
</reference>
<reference key="10">
    <citation type="journal article" date="2001" name="Biochemistry">
        <title>Pre-steady-state kinetic studies of Saccharomyces cerevisiae myristoylCoA:protein N-myristoyltransferase mutants identify residues involved in catalysis.</title>
        <authorList>
            <person name="Farazi T.A."/>
            <person name="Manchester J.K."/>
            <person name="Waksman G."/>
            <person name="Gordon J.I."/>
        </authorList>
    </citation>
    <scope>CATALYTIC ACTIVITY</scope>
    <scope>BIOPHYSICOCHEMICAL PROPERTIES</scope>
    <scope>MUTAGENESIS OF ASN-169; PHE-170; LEU-171; THR-205 AND 454-MET-LEU-455</scope>
    <scope>ACTIVE SITE</scope>
</reference>
<reference key="11">
    <citation type="journal article" date="2003" name="Nature">
        <title>Global analysis of protein localization in budding yeast.</title>
        <authorList>
            <person name="Huh W.-K."/>
            <person name="Falvo J.V."/>
            <person name="Gerke L.C."/>
            <person name="Carroll A.S."/>
            <person name="Howson R.W."/>
            <person name="Weissman J.S."/>
            <person name="O'Shea E.K."/>
        </authorList>
    </citation>
    <scope>SUBCELLULAR LOCATION [LARGE SCALE ANALYSIS]</scope>
</reference>
<reference key="12">
    <citation type="journal article" date="1998" name="Nat. Struct. Biol.">
        <title>Structure of N-myristoyltransferase with bound myristoyl-CoA and peptide substrate analogs.</title>
        <authorList>
            <person name="Bhatnagar R.S."/>
            <person name="Fuetterer K."/>
            <person name="Farazi T.A."/>
            <person name="Korolev S."/>
            <person name="Murray C.L."/>
            <person name="Jackson-Machelski E."/>
            <person name="Gokel G.W."/>
            <person name="Gordon J.I."/>
            <person name="Waksman G."/>
        </authorList>
    </citation>
    <scope>X-RAY CRYSTALLOGRAPHY (2.9 ANGSTROMS) OF 34-455 IN COMPLEX WITH MYRISTOYL-COA AND INHIBITOR</scope>
</reference>
<reference key="13">
    <citation type="journal article" date="2001" name="Biochemistry">
        <title>Structures of Saccharomyces cerevisiae N-myristoyltransferase with bound myristoylCoA and peptide provide insights about substrate recognition and catalysis.</title>
        <authorList>
            <person name="Farazi T.A."/>
            <person name="Waksman G."/>
            <person name="Gordon J.I."/>
        </authorList>
    </citation>
    <scope>X-RAY CRYSTALLOGRAPHY (2.2 ANGSTROMS) OF 34-455 IN COMPLEX WITH MYRISTOYL-COA AND SUBSTRATE</scope>
</reference>
<dbReference type="EC" id="2.3.1.97" evidence="2 5 7 8"/>
<dbReference type="EMBL" id="M23726">
    <property type="protein sequence ID" value="AAA34815.1"/>
    <property type="molecule type" value="Genomic_DNA"/>
</dbReference>
<dbReference type="EMBL" id="U14913">
    <property type="protein sequence ID" value="AAB67436.1"/>
    <property type="molecule type" value="Genomic_DNA"/>
</dbReference>
<dbReference type="EMBL" id="BK006945">
    <property type="protein sequence ID" value="DAA09514.1"/>
    <property type="molecule type" value="Genomic_DNA"/>
</dbReference>
<dbReference type="PIR" id="A40163">
    <property type="entry name" value="A40163"/>
</dbReference>
<dbReference type="RefSeq" id="NP_013296.1">
    <property type="nucleotide sequence ID" value="NM_001182082.1"/>
</dbReference>
<dbReference type="PDB" id="1IIC">
    <property type="method" value="X-ray"/>
    <property type="resolution" value="2.20 A"/>
    <property type="chains" value="A/B=34-455"/>
</dbReference>
<dbReference type="PDB" id="1IID">
    <property type="method" value="X-ray"/>
    <property type="resolution" value="2.50 A"/>
    <property type="chains" value="A=34-455"/>
</dbReference>
<dbReference type="PDB" id="2NMT">
    <property type="method" value="X-ray"/>
    <property type="resolution" value="2.90 A"/>
    <property type="chains" value="A=34-455"/>
</dbReference>
<dbReference type="PDB" id="2P6E">
    <property type="method" value="X-ray"/>
    <property type="resolution" value="2.90 A"/>
    <property type="chains" value="A/B/C/D/E/F=1-455"/>
</dbReference>
<dbReference type="PDB" id="2P6F">
    <property type="method" value="X-ray"/>
    <property type="resolution" value="3.10 A"/>
    <property type="chains" value="A/B/C/D/E/F=1-455"/>
</dbReference>
<dbReference type="PDB" id="2P6G">
    <property type="method" value="X-ray"/>
    <property type="resolution" value="3.00 A"/>
    <property type="chains" value="A/B/C/D/E/F=1-455"/>
</dbReference>
<dbReference type="PDBsum" id="1IIC"/>
<dbReference type="PDBsum" id="1IID"/>
<dbReference type="PDBsum" id="2NMT"/>
<dbReference type="PDBsum" id="2P6E"/>
<dbReference type="PDBsum" id="2P6F"/>
<dbReference type="PDBsum" id="2P6G"/>
<dbReference type="SMR" id="P14743"/>
<dbReference type="BioGRID" id="31465">
    <property type="interactions" value="311"/>
</dbReference>
<dbReference type="FunCoup" id="P14743">
    <property type="interactions" value="1080"/>
</dbReference>
<dbReference type="IntAct" id="P14743">
    <property type="interactions" value="1"/>
</dbReference>
<dbReference type="STRING" id="4932.YLR195C"/>
<dbReference type="BindingDB" id="P14743"/>
<dbReference type="ChEMBL" id="CHEMBL5484"/>
<dbReference type="iPTMnet" id="P14743"/>
<dbReference type="PaxDb" id="4932-YLR195C"/>
<dbReference type="PeptideAtlas" id="P14743"/>
<dbReference type="EnsemblFungi" id="YLR195C_mRNA">
    <property type="protein sequence ID" value="YLR195C"/>
    <property type="gene ID" value="YLR195C"/>
</dbReference>
<dbReference type="GeneID" id="850892"/>
<dbReference type="KEGG" id="sce:YLR195C"/>
<dbReference type="AGR" id="SGD:S000004185"/>
<dbReference type="SGD" id="S000004185">
    <property type="gene designation" value="NMT1"/>
</dbReference>
<dbReference type="VEuPathDB" id="FungiDB:YLR195C"/>
<dbReference type="eggNOG" id="KOG2779">
    <property type="taxonomic scope" value="Eukaryota"/>
</dbReference>
<dbReference type="GeneTree" id="ENSGT00390000017837"/>
<dbReference type="HOGENOM" id="CLU_022882_2_0_1"/>
<dbReference type="InParanoid" id="P14743"/>
<dbReference type="OMA" id="GWKRDWH"/>
<dbReference type="OrthoDB" id="60315at2759"/>
<dbReference type="BioCyc" id="YEAST:YLR195C-MONOMER"/>
<dbReference type="BRENDA" id="2.3.1.97">
    <property type="organism ID" value="984"/>
</dbReference>
<dbReference type="Reactome" id="R-SCE-2514859">
    <property type="pathway name" value="Inactivation, recovery and regulation of the phototransduction cascade"/>
</dbReference>
<dbReference type="BioGRID-ORCS" id="850892">
    <property type="hits" value="1 hit in 10 CRISPR screens"/>
</dbReference>
<dbReference type="EvolutionaryTrace" id="P14743"/>
<dbReference type="PRO" id="PR:P14743"/>
<dbReference type="Proteomes" id="UP000002311">
    <property type="component" value="Chromosome XII"/>
</dbReference>
<dbReference type="RNAct" id="P14743">
    <property type="molecule type" value="protein"/>
</dbReference>
<dbReference type="GO" id="GO:0005829">
    <property type="term" value="C:cytosol"/>
    <property type="evidence" value="ECO:0000314"/>
    <property type="project" value="SGD"/>
</dbReference>
<dbReference type="GO" id="GO:0004379">
    <property type="term" value="F:glycylpeptide N-tetradecanoyltransferase activity"/>
    <property type="evidence" value="ECO:0000315"/>
    <property type="project" value="SGD"/>
</dbReference>
<dbReference type="GO" id="GO:0072657">
    <property type="term" value="P:protein localization to membrane"/>
    <property type="evidence" value="ECO:0000318"/>
    <property type="project" value="GO_Central"/>
</dbReference>
<dbReference type="FunFam" id="3.40.630.170:FF:000003">
    <property type="entry name" value="Glycylpeptide N-tetradecanoyltransferase"/>
    <property type="match status" value="1"/>
</dbReference>
<dbReference type="FunFam" id="3.40.630.30:FF:000042">
    <property type="entry name" value="Glycylpeptide N-tetradecanoyltransferase"/>
    <property type="match status" value="1"/>
</dbReference>
<dbReference type="FunFam" id="3.40.630.30:FF:000056">
    <property type="entry name" value="Glycylpeptide N-tetradecanoyltransferase"/>
    <property type="match status" value="1"/>
</dbReference>
<dbReference type="Gene3D" id="3.40.630.30">
    <property type="match status" value="2"/>
</dbReference>
<dbReference type="InterPro" id="IPR016181">
    <property type="entry name" value="Acyl_CoA_acyltransferase"/>
</dbReference>
<dbReference type="InterPro" id="IPR000903">
    <property type="entry name" value="NMT"/>
</dbReference>
<dbReference type="InterPro" id="IPR022677">
    <property type="entry name" value="NMT_C"/>
</dbReference>
<dbReference type="InterPro" id="IPR022678">
    <property type="entry name" value="NMT_CS"/>
</dbReference>
<dbReference type="InterPro" id="IPR022676">
    <property type="entry name" value="NMT_N"/>
</dbReference>
<dbReference type="PANTHER" id="PTHR11377:SF5">
    <property type="entry name" value="GLYCYLPEPTIDE N-TETRADECANOYLTRANSFERASE"/>
    <property type="match status" value="1"/>
</dbReference>
<dbReference type="PANTHER" id="PTHR11377">
    <property type="entry name" value="N-MYRISTOYL TRANSFERASE"/>
    <property type="match status" value="1"/>
</dbReference>
<dbReference type="Pfam" id="PF01233">
    <property type="entry name" value="NMT"/>
    <property type="match status" value="1"/>
</dbReference>
<dbReference type="Pfam" id="PF02799">
    <property type="entry name" value="NMT_C"/>
    <property type="match status" value="1"/>
</dbReference>
<dbReference type="PIRSF" id="PIRSF015892">
    <property type="entry name" value="N-myristl_transf"/>
    <property type="match status" value="1"/>
</dbReference>
<dbReference type="SUPFAM" id="SSF55729">
    <property type="entry name" value="Acyl-CoA N-acyltransferases (Nat)"/>
    <property type="match status" value="2"/>
</dbReference>
<dbReference type="PROSITE" id="PS00975">
    <property type="entry name" value="NMT_1"/>
    <property type="match status" value="1"/>
</dbReference>
<dbReference type="PROSITE" id="PS00976">
    <property type="entry name" value="NMT_2"/>
    <property type="match status" value="1"/>
</dbReference>
<feature type="chain" id="PRO_0000064248" description="Glycylpeptide N-tetradecanoyltransferase">
    <location>
        <begin position="1"/>
        <end position="455"/>
    </location>
</feature>
<feature type="region of interest" description="Myristoyl CoA-binding">
    <location>
        <begin position="168"/>
        <end position="204"/>
    </location>
</feature>
<feature type="active site" description="Proton acceptor; via carboxylate" evidence="2">
    <location>
        <position position="455"/>
    </location>
</feature>
<feature type="binding site">
    <location>
        <begin position="38"/>
        <end position="41"/>
    </location>
    <ligand>
        <name>tetradecanoyl-CoA</name>
        <dbReference type="ChEBI" id="CHEBI:57385"/>
    </ligand>
</feature>
<feature type="mutagenesis site" description="In NMT1-72; temperature-sensitive mutant with myristic acid auxotrophy." evidence="6">
    <original>L</original>
    <variation>P</variation>
    <location>
        <position position="99"/>
    </location>
</feature>
<feature type="mutagenesis site" description="Reduces the chemical transformation rate; when associated with A-205." evidence="2">
    <original>N</original>
    <variation>L</variation>
    <location>
        <position position="169"/>
    </location>
</feature>
<feature type="mutagenesis site" description="Reduces the chemical transformation rate; when associated with A-171." evidence="2">
    <original>F</original>
    <variation>A</variation>
    <location>
        <position position="170"/>
    </location>
</feature>
<feature type="mutagenesis site" description="Reduces the chemical transformation rate; when associated with A-170." evidence="2">
    <original>L</original>
    <variation>A</variation>
    <location>
        <position position="171"/>
    </location>
</feature>
<feature type="mutagenesis site" description="Reduces affinity for both substrate and myristoyl-CoA." evidence="8">
    <original>A</original>
    <variation>T</variation>
    <location>
        <position position="202"/>
    </location>
</feature>
<feature type="mutagenesis site" description="Reduces the chemical transformation rate; when associated with L-169." evidence="2">
    <original>T</original>
    <variation>A</variation>
    <location>
        <position position="205"/>
    </location>
</feature>
<feature type="mutagenesis site" description="Reduces affinity for substrate, but not for myristoyl-CoA." evidence="8">
    <original>C</original>
    <variation>R</variation>
    <location>
        <position position="217"/>
    </location>
</feature>
<feature type="mutagenesis site" description="Moderately reduces affinity for myristoyl-CoA, but not for substrate." evidence="8">
    <original>S</original>
    <variation>P</variation>
    <location>
        <position position="328"/>
    </location>
</feature>
<feature type="mutagenesis site" description="Moderately reduces affinity for substrate, but not for myristoyl-CoA." evidence="8">
    <original>N</original>
    <variation>Y</variation>
    <location>
        <position position="404"/>
    </location>
</feature>
<feature type="mutagenesis site" description="Reduces affinity for myristoyl-CoA, but not for substrate." evidence="8">
    <original>N</original>
    <variation>I</variation>
    <location>
        <position position="426"/>
    </location>
</feature>
<feature type="mutagenesis site" description="In NMT1-181; temperature-sensitive with myristic acid auxotrophy. Reduces affinity for myristoyl-CoA." evidence="4">
    <original>G</original>
    <variation>D</variation>
    <location>
        <position position="451"/>
    </location>
</feature>
<feature type="mutagenesis site" description="Reduces chemical transformation rate 400-fold." evidence="2">
    <location>
        <begin position="454"/>
        <end position="455"/>
    </location>
</feature>
<feature type="helix" evidence="16">
    <location>
        <begin position="6"/>
        <end position="17"/>
    </location>
</feature>
<feature type="helix" evidence="15">
    <location>
        <begin position="35"/>
        <end position="37"/>
    </location>
</feature>
<feature type="helix" evidence="13">
    <location>
        <begin position="41"/>
        <end position="43"/>
    </location>
</feature>
<feature type="strand" evidence="13">
    <location>
        <begin position="57"/>
        <end position="60"/>
    </location>
</feature>
<feature type="helix" evidence="13">
    <location>
        <begin position="65"/>
        <end position="67"/>
    </location>
</feature>
<feature type="strand" evidence="13">
    <location>
        <begin position="79"/>
        <end position="83"/>
    </location>
</feature>
<feature type="strand" evidence="17">
    <location>
        <begin position="86"/>
        <end position="88"/>
    </location>
</feature>
<feature type="helix" evidence="13">
    <location>
        <begin position="89"/>
        <end position="102"/>
    </location>
</feature>
<feature type="strand" evidence="13">
    <location>
        <begin position="103"/>
        <end position="105"/>
    </location>
</feature>
<feature type="helix" evidence="13">
    <location>
        <begin position="107"/>
        <end position="109"/>
    </location>
</feature>
<feature type="strand" evidence="13">
    <location>
        <begin position="111"/>
        <end position="113"/>
    </location>
</feature>
<feature type="helix" evidence="13">
    <location>
        <begin position="117"/>
        <end position="124"/>
    </location>
</feature>
<feature type="helix" evidence="13">
    <location>
        <begin position="131"/>
        <end position="133"/>
    </location>
</feature>
<feature type="strand" evidence="13">
    <location>
        <begin position="134"/>
        <end position="139"/>
    </location>
</feature>
<feature type="turn" evidence="13">
    <location>
        <begin position="140"/>
        <end position="142"/>
    </location>
</feature>
<feature type="strand" evidence="13">
    <location>
        <begin position="145"/>
        <end position="158"/>
    </location>
</feature>
<feature type="strand" evidence="13">
    <location>
        <begin position="161"/>
        <end position="173"/>
    </location>
</feature>
<feature type="helix" evidence="13">
    <location>
        <begin position="175"/>
        <end position="177"/>
    </location>
</feature>
<feature type="strand" evidence="14">
    <location>
        <begin position="179"/>
        <end position="181"/>
    </location>
</feature>
<feature type="helix" evidence="13">
    <location>
        <begin position="183"/>
        <end position="195"/>
    </location>
</feature>
<feature type="turn" evidence="13">
    <location>
        <begin position="196"/>
        <end position="198"/>
    </location>
</feature>
<feature type="strand" evidence="13">
    <location>
        <begin position="202"/>
        <end position="208"/>
    </location>
</feature>
<feature type="strand" evidence="13">
    <location>
        <begin position="214"/>
        <end position="225"/>
    </location>
</feature>
<feature type="helix" evidence="13">
    <location>
        <begin position="226"/>
        <end position="231"/>
    </location>
</feature>
<feature type="helix" evidence="14">
    <location>
        <begin position="239"/>
        <end position="241"/>
    </location>
</feature>
<feature type="helix" evidence="13">
    <location>
        <begin position="243"/>
        <end position="250"/>
    </location>
</feature>
<feature type="strand" evidence="13">
    <location>
        <begin position="261"/>
        <end position="263"/>
    </location>
</feature>
<feature type="helix" evidence="13">
    <location>
        <begin position="266"/>
        <end position="268"/>
    </location>
</feature>
<feature type="helix" evidence="13">
    <location>
        <begin position="269"/>
        <end position="280"/>
    </location>
</feature>
<feature type="strand" evidence="13">
    <location>
        <begin position="283"/>
        <end position="287"/>
    </location>
</feature>
<feature type="helix" evidence="13">
    <location>
        <begin position="291"/>
        <end position="298"/>
    </location>
</feature>
<feature type="strand" evidence="16">
    <location>
        <begin position="301"/>
        <end position="303"/>
    </location>
</feature>
<feature type="helix" evidence="13">
    <location>
        <begin position="306"/>
        <end position="308"/>
    </location>
</feature>
<feature type="strand" evidence="13">
    <location>
        <begin position="311"/>
        <end position="317"/>
    </location>
</feature>
<feature type="strand" evidence="13">
    <location>
        <begin position="323"/>
        <end position="331"/>
    </location>
</feature>
<feature type="strand" evidence="13">
    <location>
        <begin position="334"/>
        <end position="336"/>
    </location>
</feature>
<feature type="strand" evidence="13">
    <location>
        <begin position="343"/>
        <end position="345"/>
    </location>
</feature>
<feature type="strand" evidence="13">
    <location>
        <begin position="347"/>
        <end position="355"/>
    </location>
</feature>
<feature type="turn" evidence="13">
    <location>
        <begin position="357"/>
        <end position="360"/>
    </location>
</feature>
<feature type="helix" evidence="13">
    <location>
        <begin position="367"/>
        <end position="390"/>
    </location>
</feature>
<feature type="strand" evidence="13">
    <location>
        <begin position="394"/>
        <end position="400"/>
    </location>
</feature>
<feature type="helix" evidence="13">
    <location>
        <begin position="404"/>
        <end position="406"/>
    </location>
</feature>
<feature type="turn" evidence="13">
    <location>
        <begin position="407"/>
        <end position="412"/>
    </location>
</feature>
<feature type="strand" evidence="13">
    <location>
        <begin position="414"/>
        <end position="425"/>
    </location>
</feature>
<feature type="strand" evidence="13">
    <location>
        <begin position="434"/>
        <end position="436"/>
    </location>
</feature>
<feature type="strand" evidence="13">
    <location>
        <begin position="440"/>
        <end position="442"/>
    </location>
</feature>
<feature type="turn" evidence="13">
    <location>
        <begin position="444"/>
        <end position="446"/>
    </location>
</feature>
<organism>
    <name type="scientific">Saccharomyces cerevisiae (strain ATCC 204508 / S288c)</name>
    <name type="common">Baker's yeast</name>
    <dbReference type="NCBI Taxonomy" id="559292"/>
    <lineage>
        <taxon>Eukaryota</taxon>
        <taxon>Fungi</taxon>
        <taxon>Dikarya</taxon>
        <taxon>Ascomycota</taxon>
        <taxon>Saccharomycotina</taxon>
        <taxon>Saccharomycetes</taxon>
        <taxon>Saccharomycetales</taxon>
        <taxon>Saccharomycetaceae</taxon>
        <taxon>Saccharomyces</taxon>
    </lineage>
</organism>
<keyword id="KW-0002">3D-structure</keyword>
<keyword id="KW-0012">Acyltransferase</keyword>
<keyword id="KW-0963">Cytoplasm</keyword>
<keyword id="KW-0903">Direct protein sequencing</keyword>
<keyword id="KW-1185">Reference proteome</keyword>
<keyword id="KW-0808">Transferase</keyword>
<evidence type="ECO:0000269" key="1">
    <source>
    </source>
</evidence>
<evidence type="ECO:0000269" key="2">
    <source>
    </source>
</evidence>
<evidence type="ECO:0000269" key="3">
    <source>
    </source>
</evidence>
<evidence type="ECO:0000269" key="4">
    <source>
    </source>
</evidence>
<evidence type="ECO:0000269" key="5">
    <source>
    </source>
</evidence>
<evidence type="ECO:0000269" key="6">
    <source>
    </source>
</evidence>
<evidence type="ECO:0000269" key="7">
    <source>
    </source>
</evidence>
<evidence type="ECO:0000269" key="8">
    <source>
    </source>
</evidence>
<evidence type="ECO:0000269" key="9">
    <source>
    </source>
</evidence>
<evidence type="ECO:0000305" key="10"/>
<evidence type="ECO:0000305" key="11">
    <source>
    </source>
</evidence>
<evidence type="ECO:0000305" key="12">
    <source>
    </source>
</evidence>
<evidence type="ECO:0007829" key="13">
    <source>
        <dbReference type="PDB" id="1IIC"/>
    </source>
</evidence>
<evidence type="ECO:0007829" key="14">
    <source>
        <dbReference type="PDB" id="1IID"/>
    </source>
</evidence>
<evidence type="ECO:0007829" key="15">
    <source>
        <dbReference type="PDB" id="2NMT"/>
    </source>
</evidence>
<evidence type="ECO:0007829" key="16">
    <source>
        <dbReference type="PDB" id="2P6E"/>
    </source>
</evidence>
<evidence type="ECO:0007829" key="17">
    <source>
        <dbReference type="PDB" id="2P6G"/>
    </source>
</evidence>
<gene>
    <name type="primary">NMT1</name>
    <name type="synonym">CDC72</name>
    <name type="ordered locus">YLR195C</name>
    <name type="ORF">L8167.14</name>
</gene>